<sequence length="284" mass="33170">MKKFTHYIVEQIVNKYNKMFQCKMNKIPKNQSITHFKTVFDLYEKIGIQEVFFNIKPTGIYIYTTYDNSIHVETIFSNNFFLEYMCEKDAIFTLKVNAMKVRNLVNTDSLEMGIRSAQDAPLVIRMSTKTIDFEKKIAIKKTQSYKLPELIDVTPLTIKSADFLEFCKSINGGKYTLSIKTKKSEMVNGVLQRGEIIFEAENSRIVIRSETPIESEFEGEFKSEYFSSLRKVTKFNTTLKIYLCPDHPLIFETTIGPKEKDKVIVWIKSLKQMEEEYHLQKSIT</sequence>
<keyword id="KW-1185">Reference proteome</keyword>
<protein>
    <recommendedName>
        <fullName>Uncharacterized protein 060L</fullName>
    </recommendedName>
</protein>
<gene>
    <name type="ORF">IIV3-060L</name>
</gene>
<organism>
    <name type="scientific">Invertebrate iridescent virus 3</name>
    <name type="common">IIV-3</name>
    <name type="synonym">Mosquito iridescent virus</name>
    <dbReference type="NCBI Taxonomy" id="345201"/>
    <lineage>
        <taxon>Viruses</taxon>
        <taxon>Varidnaviria</taxon>
        <taxon>Bamfordvirae</taxon>
        <taxon>Nucleocytoviricota</taxon>
        <taxon>Megaviricetes</taxon>
        <taxon>Pimascovirales</taxon>
        <taxon>Iridoviridae</taxon>
        <taxon>Betairidovirinae</taxon>
        <taxon>Chloriridovirus</taxon>
    </lineage>
</organism>
<accession>Q197A0</accession>
<name>VF436_IIV3</name>
<organismHost>
    <name type="scientific">Aedes vexans</name>
    <name type="common">Inland floodwater mosquito</name>
    <name type="synonym">Culex vexans</name>
    <dbReference type="NCBI Taxonomy" id="7163"/>
</organismHost>
<organismHost>
    <name type="scientific">Culex territans</name>
    <dbReference type="NCBI Taxonomy" id="42431"/>
</organismHost>
<organismHost>
    <name type="scientific">Culiseta annulata</name>
    <dbReference type="NCBI Taxonomy" id="332058"/>
</organismHost>
<organismHost>
    <name type="scientific">Ochlerotatus sollicitans</name>
    <name type="common">eastern saltmarsh mosquito</name>
    <dbReference type="NCBI Taxonomy" id="310513"/>
</organismHost>
<organismHost>
    <name type="scientific">Ochlerotatus taeniorhynchus</name>
    <name type="common">Black salt marsh mosquito</name>
    <name type="synonym">Aedes taeniorhynchus</name>
    <dbReference type="NCBI Taxonomy" id="329105"/>
</organismHost>
<organismHost>
    <name type="scientific">Psorophora ferox</name>
    <dbReference type="NCBI Taxonomy" id="7183"/>
</organismHost>
<comment type="similarity">
    <text evidence="1">Belongs to the IIV-6 436R family.</text>
</comment>
<feature type="chain" id="PRO_0000377796" description="Uncharacterized protein 060L">
    <location>
        <begin position="1"/>
        <end position="284"/>
    </location>
</feature>
<proteinExistence type="inferred from homology"/>
<reference key="1">
    <citation type="journal article" date="2006" name="J. Virol.">
        <title>Genome of invertebrate iridescent virus type 3 (mosquito iridescent virus).</title>
        <authorList>
            <person name="Delhon G."/>
            <person name="Tulman E.R."/>
            <person name="Afonso C.L."/>
            <person name="Lu Z."/>
            <person name="Becnel J.J."/>
            <person name="Moser B.A."/>
            <person name="Kutish G.F."/>
            <person name="Rock D.L."/>
        </authorList>
    </citation>
    <scope>NUCLEOTIDE SEQUENCE [LARGE SCALE GENOMIC DNA]</scope>
</reference>
<dbReference type="EMBL" id="DQ643392">
    <property type="protein sequence ID" value="ABF82090.1"/>
    <property type="molecule type" value="Genomic_DNA"/>
</dbReference>
<dbReference type="RefSeq" id="YP_654632.1">
    <property type="nucleotide sequence ID" value="NC_008187.1"/>
</dbReference>
<dbReference type="SMR" id="Q197A0"/>
<dbReference type="KEGG" id="vg:4156310"/>
<dbReference type="OrthoDB" id="12738at10239"/>
<dbReference type="Proteomes" id="UP000001358">
    <property type="component" value="Genome"/>
</dbReference>
<dbReference type="Gene3D" id="3.70.10.10">
    <property type="match status" value="1"/>
</dbReference>
<dbReference type="InterPro" id="IPR046938">
    <property type="entry name" value="DNA_clamp_sf"/>
</dbReference>
<dbReference type="SUPFAM" id="SSF55979">
    <property type="entry name" value="DNA clamp"/>
    <property type="match status" value="1"/>
</dbReference>
<evidence type="ECO:0000305" key="1"/>